<feature type="chain" id="PRO_0000061210" description="Cytochrome b">
    <location>
        <begin position="1"/>
        <end position="379"/>
    </location>
</feature>
<feature type="transmembrane region" description="Helical" evidence="2">
    <location>
        <begin position="33"/>
        <end position="53"/>
    </location>
</feature>
<feature type="transmembrane region" description="Helical" evidence="2">
    <location>
        <begin position="77"/>
        <end position="98"/>
    </location>
</feature>
<feature type="transmembrane region" description="Helical" evidence="2">
    <location>
        <begin position="113"/>
        <end position="133"/>
    </location>
</feature>
<feature type="transmembrane region" description="Helical" evidence="2">
    <location>
        <begin position="178"/>
        <end position="198"/>
    </location>
</feature>
<feature type="transmembrane region" description="Helical" evidence="2">
    <location>
        <begin position="226"/>
        <end position="246"/>
    </location>
</feature>
<feature type="transmembrane region" description="Helical" evidence="2">
    <location>
        <begin position="288"/>
        <end position="308"/>
    </location>
</feature>
<feature type="transmembrane region" description="Helical" evidence="2">
    <location>
        <begin position="320"/>
        <end position="340"/>
    </location>
</feature>
<feature type="transmembrane region" description="Helical" evidence="2">
    <location>
        <begin position="347"/>
        <end position="367"/>
    </location>
</feature>
<feature type="binding site" description="axial binding residue" evidence="2">
    <location>
        <position position="83"/>
    </location>
    <ligand>
        <name>heme b</name>
        <dbReference type="ChEBI" id="CHEBI:60344"/>
        <label>b562</label>
    </ligand>
    <ligandPart>
        <name>Fe</name>
        <dbReference type="ChEBI" id="CHEBI:18248"/>
    </ligandPart>
</feature>
<feature type="binding site" description="axial binding residue" evidence="2">
    <location>
        <position position="97"/>
    </location>
    <ligand>
        <name>heme b</name>
        <dbReference type="ChEBI" id="CHEBI:60344"/>
        <label>b566</label>
    </ligand>
    <ligandPart>
        <name>Fe</name>
        <dbReference type="ChEBI" id="CHEBI:18248"/>
    </ligandPart>
</feature>
<feature type="binding site" description="axial binding residue" evidence="2">
    <location>
        <position position="182"/>
    </location>
    <ligand>
        <name>heme b</name>
        <dbReference type="ChEBI" id="CHEBI:60344"/>
        <label>b562</label>
    </ligand>
    <ligandPart>
        <name>Fe</name>
        <dbReference type="ChEBI" id="CHEBI:18248"/>
    </ligandPart>
</feature>
<feature type="binding site" description="axial binding residue" evidence="2">
    <location>
        <position position="196"/>
    </location>
    <ligand>
        <name>heme b</name>
        <dbReference type="ChEBI" id="CHEBI:60344"/>
        <label>b566</label>
    </ligand>
    <ligandPart>
        <name>Fe</name>
        <dbReference type="ChEBI" id="CHEBI:18248"/>
    </ligandPart>
</feature>
<feature type="binding site" evidence="2">
    <location>
        <position position="201"/>
    </location>
    <ligand>
        <name>a ubiquinone</name>
        <dbReference type="ChEBI" id="CHEBI:16389"/>
    </ligand>
</feature>
<sequence length="379" mass="42919">MTNIRKSHPLMKIVNNAFIDLPAPSNISSWWNFGSLLGICLILQILTGLFLAMHYTSDTMTAFSSVTHICRDVNYGWIIRYMHANGASMFFICLFMHVGRGLYYGSYTFLETWNIGVILLFTVMATAFMGYVLPWGQMSFWGATVITNLLSAIPYIGTNLVEWIWGGFSVDKATLTRFFAFHFILPFIIAALAMVHLLFLHETGSNNPTGITSDMDKIPFHPYYTIKDILGILLLILILMALVLFTPDLLGDPDNYTPANPLNTPPHIKPEWYFLFAYAILRSIPNKLGGVLALVLSILILIFMPLLHTSKQRSMMFRPLSQCLFWILVADLLTLTWIGGQPVEHPYIIIGQLASIMYFLLILVMMPVASMVENNLLKW</sequence>
<organism>
    <name type="scientific">Moschus moschiferus</name>
    <name type="common">Siberian musk deer</name>
    <name type="synonym">Moschus sibiricus</name>
    <dbReference type="NCBI Taxonomy" id="68415"/>
    <lineage>
        <taxon>Eukaryota</taxon>
        <taxon>Metazoa</taxon>
        <taxon>Chordata</taxon>
        <taxon>Craniata</taxon>
        <taxon>Vertebrata</taxon>
        <taxon>Euteleostomi</taxon>
        <taxon>Mammalia</taxon>
        <taxon>Eutheria</taxon>
        <taxon>Laurasiatheria</taxon>
        <taxon>Artiodactyla</taxon>
        <taxon>Ruminantia</taxon>
        <taxon>Pecora</taxon>
        <taxon>Moschidae</taxon>
        <taxon>Moschus</taxon>
    </lineage>
</organism>
<gene>
    <name type="primary">MT-CYB</name>
    <name type="synonym">COB</name>
    <name type="synonym">CYTB</name>
    <name type="synonym">MTCYB</name>
</gene>
<dbReference type="EMBL" id="AF026883">
    <property type="protein sequence ID" value="AAB94605.1"/>
    <property type="molecule type" value="Genomic_DNA"/>
</dbReference>
<dbReference type="SMR" id="O47583"/>
<dbReference type="Proteomes" id="UP000694544">
    <property type="component" value="Unplaced"/>
</dbReference>
<dbReference type="GO" id="GO:0005743">
    <property type="term" value="C:mitochondrial inner membrane"/>
    <property type="evidence" value="ECO:0007669"/>
    <property type="project" value="UniProtKB-SubCell"/>
</dbReference>
<dbReference type="GO" id="GO:0045275">
    <property type="term" value="C:respiratory chain complex III"/>
    <property type="evidence" value="ECO:0007669"/>
    <property type="project" value="InterPro"/>
</dbReference>
<dbReference type="GO" id="GO:0046872">
    <property type="term" value="F:metal ion binding"/>
    <property type="evidence" value="ECO:0007669"/>
    <property type="project" value="UniProtKB-KW"/>
</dbReference>
<dbReference type="GO" id="GO:0008121">
    <property type="term" value="F:ubiquinol-cytochrome-c reductase activity"/>
    <property type="evidence" value="ECO:0007669"/>
    <property type="project" value="InterPro"/>
</dbReference>
<dbReference type="GO" id="GO:0006122">
    <property type="term" value="P:mitochondrial electron transport, ubiquinol to cytochrome c"/>
    <property type="evidence" value="ECO:0007669"/>
    <property type="project" value="TreeGrafter"/>
</dbReference>
<dbReference type="CDD" id="cd00290">
    <property type="entry name" value="cytochrome_b_C"/>
    <property type="match status" value="1"/>
</dbReference>
<dbReference type="CDD" id="cd00284">
    <property type="entry name" value="Cytochrome_b_N"/>
    <property type="match status" value="1"/>
</dbReference>
<dbReference type="FunFam" id="1.20.810.10:FF:000002">
    <property type="entry name" value="Cytochrome b"/>
    <property type="match status" value="1"/>
</dbReference>
<dbReference type="Gene3D" id="1.20.810.10">
    <property type="entry name" value="Cytochrome Bc1 Complex, Chain C"/>
    <property type="match status" value="1"/>
</dbReference>
<dbReference type="InterPro" id="IPR005798">
    <property type="entry name" value="Cyt_b/b6_C"/>
</dbReference>
<dbReference type="InterPro" id="IPR036150">
    <property type="entry name" value="Cyt_b/b6_C_sf"/>
</dbReference>
<dbReference type="InterPro" id="IPR005797">
    <property type="entry name" value="Cyt_b/b6_N"/>
</dbReference>
<dbReference type="InterPro" id="IPR027387">
    <property type="entry name" value="Cytb/b6-like_sf"/>
</dbReference>
<dbReference type="InterPro" id="IPR030689">
    <property type="entry name" value="Cytochrome_b"/>
</dbReference>
<dbReference type="InterPro" id="IPR048260">
    <property type="entry name" value="Cytochrome_b_C_euk/bac"/>
</dbReference>
<dbReference type="InterPro" id="IPR048259">
    <property type="entry name" value="Cytochrome_b_N_euk/bac"/>
</dbReference>
<dbReference type="InterPro" id="IPR016174">
    <property type="entry name" value="Di-haem_cyt_TM"/>
</dbReference>
<dbReference type="PANTHER" id="PTHR19271">
    <property type="entry name" value="CYTOCHROME B"/>
    <property type="match status" value="1"/>
</dbReference>
<dbReference type="PANTHER" id="PTHR19271:SF16">
    <property type="entry name" value="CYTOCHROME B"/>
    <property type="match status" value="1"/>
</dbReference>
<dbReference type="Pfam" id="PF00032">
    <property type="entry name" value="Cytochrom_B_C"/>
    <property type="match status" value="1"/>
</dbReference>
<dbReference type="Pfam" id="PF00033">
    <property type="entry name" value="Cytochrome_B"/>
    <property type="match status" value="1"/>
</dbReference>
<dbReference type="PIRSF" id="PIRSF038885">
    <property type="entry name" value="COB"/>
    <property type="match status" value="1"/>
</dbReference>
<dbReference type="SUPFAM" id="SSF81648">
    <property type="entry name" value="a domain/subunit of cytochrome bc1 complex (Ubiquinol-cytochrome c reductase)"/>
    <property type="match status" value="1"/>
</dbReference>
<dbReference type="SUPFAM" id="SSF81342">
    <property type="entry name" value="Transmembrane di-heme cytochromes"/>
    <property type="match status" value="1"/>
</dbReference>
<dbReference type="PROSITE" id="PS51003">
    <property type="entry name" value="CYTB_CTER"/>
    <property type="match status" value="1"/>
</dbReference>
<dbReference type="PROSITE" id="PS51002">
    <property type="entry name" value="CYTB_NTER"/>
    <property type="match status" value="1"/>
</dbReference>
<evidence type="ECO:0000250" key="1"/>
<evidence type="ECO:0000250" key="2">
    <source>
        <dbReference type="UniProtKB" id="P00157"/>
    </source>
</evidence>
<evidence type="ECO:0000255" key="3">
    <source>
        <dbReference type="PROSITE-ProRule" id="PRU00967"/>
    </source>
</evidence>
<evidence type="ECO:0000255" key="4">
    <source>
        <dbReference type="PROSITE-ProRule" id="PRU00968"/>
    </source>
</evidence>
<keyword id="KW-0249">Electron transport</keyword>
<keyword id="KW-0349">Heme</keyword>
<keyword id="KW-0408">Iron</keyword>
<keyword id="KW-0472">Membrane</keyword>
<keyword id="KW-0479">Metal-binding</keyword>
<keyword id="KW-0496">Mitochondrion</keyword>
<keyword id="KW-0999">Mitochondrion inner membrane</keyword>
<keyword id="KW-1185">Reference proteome</keyword>
<keyword id="KW-0679">Respiratory chain</keyword>
<keyword id="KW-0812">Transmembrane</keyword>
<keyword id="KW-1133">Transmembrane helix</keyword>
<keyword id="KW-0813">Transport</keyword>
<keyword id="KW-0830">Ubiquinone</keyword>
<protein>
    <recommendedName>
        <fullName>Cytochrome b</fullName>
    </recommendedName>
    <alternativeName>
        <fullName>Complex III subunit 3</fullName>
    </alternativeName>
    <alternativeName>
        <fullName>Complex III subunit III</fullName>
    </alternativeName>
    <alternativeName>
        <fullName>Cytochrome b-c1 complex subunit 3</fullName>
    </alternativeName>
    <alternativeName>
        <fullName>Ubiquinol-cytochrome-c reductase complex cytochrome b subunit</fullName>
    </alternativeName>
</protein>
<accession>O47583</accession>
<comment type="function">
    <text evidence="2">Component of the ubiquinol-cytochrome c reductase complex (complex III or cytochrome b-c1 complex) that is part of the mitochondrial respiratory chain. The b-c1 complex mediates electron transfer from ubiquinol to cytochrome c. Contributes to the generation of a proton gradient across the mitochondrial membrane that is then used for ATP synthesis.</text>
</comment>
<comment type="cofactor">
    <cofactor evidence="2">
        <name>heme b</name>
        <dbReference type="ChEBI" id="CHEBI:60344"/>
    </cofactor>
    <text evidence="2">Binds 2 heme b groups non-covalently.</text>
</comment>
<comment type="subunit">
    <text evidence="2">The cytochrome bc1 complex contains 11 subunits: 3 respiratory subunits (MT-CYB, CYC1 and UQCRFS1), 2 core proteins (UQCRC1 and UQCRC2) and 6 low-molecular weight proteins (UQCRH/QCR6, UQCRB/QCR7, UQCRQ/QCR8, UQCR10/QCR9, UQCR11/QCR10 and a cleavage product of UQCRFS1). This cytochrome bc1 complex then forms a dimer.</text>
</comment>
<comment type="subcellular location">
    <subcellularLocation>
        <location evidence="2">Mitochondrion inner membrane</location>
        <topology evidence="2">Multi-pass membrane protein</topology>
    </subcellularLocation>
</comment>
<comment type="miscellaneous">
    <text evidence="1">Heme 1 (or BL or b562) is low-potential and absorbs at about 562 nm, and heme 2 (or BH or b566) is high-potential and absorbs at about 566 nm.</text>
</comment>
<comment type="similarity">
    <text evidence="3 4">Belongs to the cytochrome b family.</text>
</comment>
<comment type="caution">
    <text evidence="2">The full-length protein contains only eight transmembrane helices, not nine as predicted by bioinformatics tools.</text>
</comment>
<name>CYB_MOSMO</name>
<geneLocation type="mitochondrion"/>
<proteinExistence type="inferred from homology"/>
<reference key="1">
    <citation type="submission" date="1997-09" db="EMBL/GenBank/DDBJ databases">
        <authorList>
            <person name="Su B."/>
            <person name="Wang Y.X."/>
            <person name="Lan H."/>
            <person name="Wang W."/>
            <person name="Zhang Y.P."/>
        </authorList>
    </citation>
    <scope>NUCLEOTIDE SEQUENCE [GENOMIC DNA]</scope>
</reference>